<keyword id="KW-0472">Membrane</keyword>
<keyword id="KW-0520">NAD</keyword>
<keyword id="KW-0521">NADP</keyword>
<keyword id="KW-0618">Plastoquinone</keyword>
<keyword id="KW-0874">Quinone</keyword>
<keyword id="KW-1185">Reference proteome</keyword>
<keyword id="KW-0793">Thylakoid</keyword>
<keyword id="KW-1278">Translocase</keyword>
<keyword id="KW-0813">Transport</keyword>
<organism>
    <name type="scientific">Synechococcus sp. (strain RCC307)</name>
    <dbReference type="NCBI Taxonomy" id="316278"/>
    <lineage>
        <taxon>Bacteria</taxon>
        <taxon>Bacillati</taxon>
        <taxon>Cyanobacteriota</taxon>
        <taxon>Cyanophyceae</taxon>
        <taxon>Synechococcales</taxon>
        <taxon>Synechococcaceae</taxon>
        <taxon>Synechococcus</taxon>
    </lineage>
</organism>
<protein>
    <recommendedName>
        <fullName evidence="1">NAD(P)H-quinone oxidoreductase subunit O</fullName>
        <ecNumber evidence="1">7.1.1.-</ecNumber>
    </recommendedName>
    <alternativeName>
        <fullName evidence="1">NAD(P)H dehydrogenase I subunit O</fullName>
    </alternativeName>
    <alternativeName>
        <fullName>NDH-1 subunit O</fullName>
    </alternativeName>
    <alternativeName>
        <fullName>NDH-O</fullName>
    </alternativeName>
</protein>
<name>NDHO_SYNR3</name>
<dbReference type="EC" id="7.1.1.-" evidence="1"/>
<dbReference type="EMBL" id="CT978603">
    <property type="protein sequence ID" value="CAK27172.1"/>
    <property type="molecule type" value="Genomic_DNA"/>
</dbReference>
<dbReference type="SMR" id="A5GQL3"/>
<dbReference type="STRING" id="316278.SynRCC307_0269"/>
<dbReference type="KEGG" id="syr:SynRCC307_0269"/>
<dbReference type="eggNOG" id="ENOG5032XZT">
    <property type="taxonomic scope" value="Bacteria"/>
</dbReference>
<dbReference type="HOGENOM" id="CLU_195299_0_0_3"/>
<dbReference type="OrthoDB" id="426633at2"/>
<dbReference type="Proteomes" id="UP000001115">
    <property type="component" value="Chromosome"/>
</dbReference>
<dbReference type="GO" id="GO:0031676">
    <property type="term" value="C:plasma membrane-derived thylakoid membrane"/>
    <property type="evidence" value="ECO:0007669"/>
    <property type="project" value="UniProtKB-SubCell"/>
</dbReference>
<dbReference type="GO" id="GO:0016655">
    <property type="term" value="F:oxidoreductase activity, acting on NAD(P)H, quinone or similar compound as acceptor"/>
    <property type="evidence" value="ECO:0007669"/>
    <property type="project" value="UniProtKB-UniRule"/>
</dbReference>
<dbReference type="GO" id="GO:0048038">
    <property type="term" value="F:quinone binding"/>
    <property type="evidence" value="ECO:0007669"/>
    <property type="project" value="UniProtKB-KW"/>
</dbReference>
<dbReference type="HAMAP" id="MF_01354">
    <property type="entry name" value="NDH1_NDH1O"/>
    <property type="match status" value="1"/>
</dbReference>
<dbReference type="InterPro" id="IPR020905">
    <property type="entry name" value="NdhO"/>
</dbReference>
<dbReference type="Pfam" id="PF11910">
    <property type="entry name" value="NdhO"/>
    <property type="match status" value="1"/>
</dbReference>
<comment type="function">
    <text evidence="1">NDH-1 shuttles electrons from an unknown electron donor, via FMN and iron-sulfur (Fe-S) centers, to quinones in the respiratory and/or the photosynthetic chain. The immediate electron acceptor for the enzyme in this species is believed to be plastoquinone. Couples the redox reaction to proton translocation, and thus conserves the redox energy in a proton gradient. Cyanobacterial NDH-1 also plays a role in inorganic carbon-concentration.</text>
</comment>
<comment type="catalytic activity">
    <reaction evidence="1">
        <text>a plastoquinone + NADH + (n+1) H(+)(in) = a plastoquinol + NAD(+) + n H(+)(out)</text>
        <dbReference type="Rhea" id="RHEA:42608"/>
        <dbReference type="Rhea" id="RHEA-COMP:9561"/>
        <dbReference type="Rhea" id="RHEA-COMP:9562"/>
        <dbReference type="ChEBI" id="CHEBI:15378"/>
        <dbReference type="ChEBI" id="CHEBI:17757"/>
        <dbReference type="ChEBI" id="CHEBI:57540"/>
        <dbReference type="ChEBI" id="CHEBI:57945"/>
        <dbReference type="ChEBI" id="CHEBI:62192"/>
    </reaction>
</comment>
<comment type="catalytic activity">
    <reaction evidence="1">
        <text>a plastoquinone + NADPH + (n+1) H(+)(in) = a plastoquinol + NADP(+) + n H(+)(out)</text>
        <dbReference type="Rhea" id="RHEA:42612"/>
        <dbReference type="Rhea" id="RHEA-COMP:9561"/>
        <dbReference type="Rhea" id="RHEA-COMP:9562"/>
        <dbReference type="ChEBI" id="CHEBI:15378"/>
        <dbReference type="ChEBI" id="CHEBI:17757"/>
        <dbReference type="ChEBI" id="CHEBI:57783"/>
        <dbReference type="ChEBI" id="CHEBI:58349"/>
        <dbReference type="ChEBI" id="CHEBI:62192"/>
    </reaction>
</comment>
<comment type="subunit">
    <text evidence="1">NDH-1 can be composed of about 15 different subunits; different subcomplexes with different compositions have been identified which probably have different functions.</text>
</comment>
<comment type="subcellular location">
    <subcellularLocation>
        <location evidence="1">Cellular thylakoid membrane</location>
        <topology evidence="1">Peripheral membrane protein</topology>
        <orientation evidence="1">Cytoplasmic side</orientation>
    </subcellularLocation>
</comment>
<comment type="similarity">
    <text evidence="1">Belongs to the complex I NdhO subunit family.</text>
</comment>
<evidence type="ECO:0000255" key="1">
    <source>
        <dbReference type="HAMAP-Rule" id="MF_01354"/>
    </source>
</evidence>
<accession>A5GQL3</accession>
<reference key="1">
    <citation type="submission" date="2006-05" db="EMBL/GenBank/DDBJ databases">
        <authorList>
            <consortium name="Genoscope"/>
        </authorList>
    </citation>
    <scope>NUCLEOTIDE SEQUENCE [LARGE SCALE GENOMIC DNA]</scope>
    <source>
        <strain>RCC307</strain>
    </source>
</reference>
<feature type="chain" id="PRO_0000353659" description="NAD(P)H-quinone oxidoreductase subunit O">
    <location>
        <begin position="1"/>
        <end position="74"/>
    </location>
</feature>
<proteinExistence type="inferred from homology"/>
<sequence length="74" mass="8065">MADALKKGSLIRVNREAYLSSVEAKASAGDPPAYLLEGPGEVLAVKGDYAQLRFRQPVPDIWLRMDQLEAYAGS</sequence>
<gene>
    <name evidence="1" type="primary">ndhO</name>
    <name type="ordered locus">SynRCC307_0269</name>
</gene>